<name>FOLD_LISMF</name>
<gene>
    <name evidence="1" type="primary">folD</name>
    <name type="ordered locus">LMOf2365_1377</name>
</gene>
<accession>Q71ZW2</accession>
<feature type="chain" id="PRO_0000268390" description="Bifunctional protein FolD">
    <location>
        <begin position="1"/>
        <end position="284"/>
    </location>
</feature>
<feature type="binding site" evidence="1">
    <location>
        <begin position="164"/>
        <end position="166"/>
    </location>
    <ligand>
        <name>NADP(+)</name>
        <dbReference type="ChEBI" id="CHEBI:58349"/>
    </ligand>
</feature>
<feature type="binding site" evidence="1">
    <location>
        <position position="189"/>
    </location>
    <ligand>
        <name>NADP(+)</name>
        <dbReference type="ChEBI" id="CHEBI:58349"/>
    </ligand>
</feature>
<evidence type="ECO:0000255" key="1">
    <source>
        <dbReference type="HAMAP-Rule" id="MF_01576"/>
    </source>
</evidence>
<sequence length="284" mass="30909">MGEIIDGKKLAKEIQEKVTREVAELVKEGKKPGLAVVLVGDNQASRTYVRNKQKRTEEAGMKSVLIELPENVTEEKLLSVVEELNEDKTIHGILVQLPLPEHISEEKVIDTISYDKDVDGFHPVNVGNLFIGKDSFVPCTPAGIIELIKSTGTQIEGKRAVVIGRSNIVGKPVAQLLLIENATVTIAHSRTKDLPQVAKEADILVVATGLAKFVKKDYIKPGAVVIDVGMDRDENNKLCGDVDFDDVVEEAGFITPVPGGVGPMTITMLLANTLKAAKRIWKMN</sequence>
<dbReference type="EC" id="1.5.1.5" evidence="1"/>
<dbReference type="EC" id="3.5.4.9" evidence="1"/>
<dbReference type="EMBL" id="AE017262">
    <property type="protein sequence ID" value="AAT04152.1"/>
    <property type="molecule type" value="Genomic_DNA"/>
</dbReference>
<dbReference type="RefSeq" id="WP_010958891.1">
    <property type="nucleotide sequence ID" value="NC_002973.6"/>
</dbReference>
<dbReference type="SMR" id="Q71ZW2"/>
<dbReference type="KEGG" id="lmf:LMOf2365_1377"/>
<dbReference type="HOGENOM" id="CLU_034045_2_1_9"/>
<dbReference type="UniPathway" id="UPA00193"/>
<dbReference type="GO" id="GO:0005829">
    <property type="term" value="C:cytosol"/>
    <property type="evidence" value="ECO:0007669"/>
    <property type="project" value="TreeGrafter"/>
</dbReference>
<dbReference type="GO" id="GO:0004477">
    <property type="term" value="F:methenyltetrahydrofolate cyclohydrolase activity"/>
    <property type="evidence" value="ECO:0007669"/>
    <property type="project" value="UniProtKB-UniRule"/>
</dbReference>
<dbReference type="GO" id="GO:0004488">
    <property type="term" value="F:methylenetetrahydrofolate dehydrogenase (NADP+) activity"/>
    <property type="evidence" value="ECO:0007669"/>
    <property type="project" value="UniProtKB-UniRule"/>
</dbReference>
<dbReference type="GO" id="GO:0000105">
    <property type="term" value="P:L-histidine biosynthetic process"/>
    <property type="evidence" value="ECO:0007669"/>
    <property type="project" value="UniProtKB-KW"/>
</dbReference>
<dbReference type="GO" id="GO:0009086">
    <property type="term" value="P:methionine biosynthetic process"/>
    <property type="evidence" value="ECO:0007669"/>
    <property type="project" value="UniProtKB-KW"/>
</dbReference>
<dbReference type="GO" id="GO:0006164">
    <property type="term" value="P:purine nucleotide biosynthetic process"/>
    <property type="evidence" value="ECO:0007669"/>
    <property type="project" value="UniProtKB-KW"/>
</dbReference>
<dbReference type="GO" id="GO:0035999">
    <property type="term" value="P:tetrahydrofolate interconversion"/>
    <property type="evidence" value="ECO:0007669"/>
    <property type="project" value="UniProtKB-UniRule"/>
</dbReference>
<dbReference type="CDD" id="cd01080">
    <property type="entry name" value="NAD_bind_m-THF_DH_Cyclohyd"/>
    <property type="match status" value="1"/>
</dbReference>
<dbReference type="FunFam" id="3.40.50.10860:FF:000001">
    <property type="entry name" value="Bifunctional protein FolD"/>
    <property type="match status" value="1"/>
</dbReference>
<dbReference type="FunFam" id="3.40.50.720:FF:000006">
    <property type="entry name" value="Bifunctional protein FolD"/>
    <property type="match status" value="1"/>
</dbReference>
<dbReference type="Gene3D" id="3.40.50.10860">
    <property type="entry name" value="Leucine Dehydrogenase, chain A, domain 1"/>
    <property type="match status" value="1"/>
</dbReference>
<dbReference type="Gene3D" id="3.40.50.720">
    <property type="entry name" value="NAD(P)-binding Rossmann-like Domain"/>
    <property type="match status" value="1"/>
</dbReference>
<dbReference type="HAMAP" id="MF_01576">
    <property type="entry name" value="THF_DHG_CYH"/>
    <property type="match status" value="1"/>
</dbReference>
<dbReference type="InterPro" id="IPR046346">
    <property type="entry name" value="Aminoacid_DH-like_N_sf"/>
</dbReference>
<dbReference type="InterPro" id="IPR036291">
    <property type="entry name" value="NAD(P)-bd_dom_sf"/>
</dbReference>
<dbReference type="InterPro" id="IPR000672">
    <property type="entry name" value="THF_DH/CycHdrlase"/>
</dbReference>
<dbReference type="InterPro" id="IPR020630">
    <property type="entry name" value="THF_DH/CycHdrlase_cat_dom"/>
</dbReference>
<dbReference type="InterPro" id="IPR020867">
    <property type="entry name" value="THF_DH/CycHdrlase_CS"/>
</dbReference>
<dbReference type="InterPro" id="IPR020631">
    <property type="entry name" value="THF_DH/CycHdrlase_NAD-bd_dom"/>
</dbReference>
<dbReference type="NCBIfam" id="NF008058">
    <property type="entry name" value="PRK10792.1"/>
    <property type="match status" value="1"/>
</dbReference>
<dbReference type="NCBIfam" id="NF010767">
    <property type="entry name" value="PRK14170.1"/>
    <property type="match status" value="1"/>
</dbReference>
<dbReference type="NCBIfam" id="NF010783">
    <property type="entry name" value="PRK14186.1"/>
    <property type="match status" value="1"/>
</dbReference>
<dbReference type="NCBIfam" id="NF010785">
    <property type="entry name" value="PRK14188.1"/>
    <property type="match status" value="1"/>
</dbReference>
<dbReference type="PANTHER" id="PTHR48099:SF5">
    <property type="entry name" value="C-1-TETRAHYDROFOLATE SYNTHASE, CYTOPLASMIC"/>
    <property type="match status" value="1"/>
</dbReference>
<dbReference type="PANTHER" id="PTHR48099">
    <property type="entry name" value="C-1-TETRAHYDROFOLATE SYNTHASE, CYTOPLASMIC-RELATED"/>
    <property type="match status" value="1"/>
</dbReference>
<dbReference type="Pfam" id="PF00763">
    <property type="entry name" value="THF_DHG_CYH"/>
    <property type="match status" value="1"/>
</dbReference>
<dbReference type="Pfam" id="PF02882">
    <property type="entry name" value="THF_DHG_CYH_C"/>
    <property type="match status" value="1"/>
</dbReference>
<dbReference type="PRINTS" id="PR00085">
    <property type="entry name" value="THFDHDRGNASE"/>
</dbReference>
<dbReference type="SUPFAM" id="SSF53223">
    <property type="entry name" value="Aminoacid dehydrogenase-like, N-terminal domain"/>
    <property type="match status" value="1"/>
</dbReference>
<dbReference type="SUPFAM" id="SSF51735">
    <property type="entry name" value="NAD(P)-binding Rossmann-fold domains"/>
    <property type="match status" value="1"/>
</dbReference>
<dbReference type="PROSITE" id="PS00766">
    <property type="entry name" value="THF_DHG_CYH_1"/>
    <property type="match status" value="1"/>
</dbReference>
<dbReference type="PROSITE" id="PS00767">
    <property type="entry name" value="THF_DHG_CYH_2"/>
    <property type="match status" value="1"/>
</dbReference>
<proteinExistence type="inferred from homology"/>
<reference key="1">
    <citation type="journal article" date="2004" name="Nucleic Acids Res.">
        <title>Whole genome comparisons of serotype 4b and 1/2a strains of the food-borne pathogen Listeria monocytogenes reveal new insights into the core genome components of this species.</title>
        <authorList>
            <person name="Nelson K.E."/>
            <person name="Fouts D.E."/>
            <person name="Mongodin E.F."/>
            <person name="Ravel J."/>
            <person name="DeBoy R.T."/>
            <person name="Kolonay J.F."/>
            <person name="Rasko D.A."/>
            <person name="Angiuoli S.V."/>
            <person name="Gill S.R."/>
            <person name="Paulsen I.T."/>
            <person name="Peterson J.D."/>
            <person name="White O."/>
            <person name="Nelson W.C."/>
            <person name="Nierman W.C."/>
            <person name="Beanan M.J."/>
            <person name="Brinkac L.M."/>
            <person name="Daugherty S.C."/>
            <person name="Dodson R.J."/>
            <person name="Durkin A.S."/>
            <person name="Madupu R."/>
            <person name="Haft D.H."/>
            <person name="Selengut J."/>
            <person name="Van Aken S.E."/>
            <person name="Khouri H.M."/>
            <person name="Fedorova N."/>
            <person name="Forberger H.A."/>
            <person name="Tran B."/>
            <person name="Kathariou S."/>
            <person name="Wonderling L.D."/>
            <person name="Uhlich G.A."/>
            <person name="Bayles D.O."/>
            <person name="Luchansky J.B."/>
            <person name="Fraser C.M."/>
        </authorList>
    </citation>
    <scope>NUCLEOTIDE SEQUENCE [LARGE SCALE GENOMIC DNA]</scope>
    <source>
        <strain>F2365</strain>
    </source>
</reference>
<keyword id="KW-0028">Amino-acid biosynthesis</keyword>
<keyword id="KW-0368">Histidine biosynthesis</keyword>
<keyword id="KW-0378">Hydrolase</keyword>
<keyword id="KW-0486">Methionine biosynthesis</keyword>
<keyword id="KW-0511">Multifunctional enzyme</keyword>
<keyword id="KW-0521">NADP</keyword>
<keyword id="KW-0554">One-carbon metabolism</keyword>
<keyword id="KW-0560">Oxidoreductase</keyword>
<keyword id="KW-0658">Purine biosynthesis</keyword>
<organism>
    <name type="scientific">Listeria monocytogenes serotype 4b (strain F2365)</name>
    <dbReference type="NCBI Taxonomy" id="265669"/>
    <lineage>
        <taxon>Bacteria</taxon>
        <taxon>Bacillati</taxon>
        <taxon>Bacillota</taxon>
        <taxon>Bacilli</taxon>
        <taxon>Bacillales</taxon>
        <taxon>Listeriaceae</taxon>
        <taxon>Listeria</taxon>
    </lineage>
</organism>
<comment type="function">
    <text evidence="1">Catalyzes the oxidation of 5,10-methylenetetrahydrofolate to 5,10-methenyltetrahydrofolate and then the hydrolysis of 5,10-methenyltetrahydrofolate to 10-formyltetrahydrofolate.</text>
</comment>
<comment type="catalytic activity">
    <reaction evidence="1">
        <text>(6R)-5,10-methylene-5,6,7,8-tetrahydrofolate + NADP(+) = (6R)-5,10-methenyltetrahydrofolate + NADPH</text>
        <dbReference type="Rhea" id="RHEA:22812"/>
        <dbReference type="ChEBI" id="CHEBI:15636"/>
        <dbReference type="ChEBI" id="CHEBI:57455"/>
        <dbReference type="ChEBI" id="CHEBI:57783"/>
        <dbReference type="ChEBI" id="CHEBI:58349"/>
        <dbReference type="EC" id="1.5.1.5"/>
    </reaction>
</comment>
<comment type="catalytic activity">
    <reaction evidence="1">
        <text>(6R)-5,10-methenyltetrahydrofolate + H2O = (6R)-10-formyltetrahydrofolate + H(+)</text>
        <dbReference type="Rhea" id="RHEA:23700"/>
        <dbReference type="ChEBI" id="CHEBI:15377"/>
        <dbReference type="ChEBI" id="CHEBI:15378"/>
        <dbReference type="ChEBI" id="CHEBI:57455"/>
        <dbReference type="ChEBI" id="CHEBI:195366"/>
        <dbReference type="EC" id="3.5.4.9"/>
    </reaction>
</comment>
<comment type="pathway">
    <text evidence="1">One-carbon metabolism; tetrahydrofolate interconversion.</text>
</comment>
<comment type="subunit">
    <text evidence="1">Homodimer.</text>
</comment>
<comment type="similarity">
    <text evidence="1">Belongs to the tetrahydrofolate dehydrogenase/cyclohydrolase family.</text>
</comment>
<protein>
    <recommendedName>
        <fullName evidence="1">Bifunctional protein FolD</fullName>
    </recommendedName>
    <domain>
        <recommendedName>
            <fullName evidence="1">Methylenetetrahydrofolate dehydrogenase</fullName>
            <ecNumber evidence="1">1.5.1.5</ecNumber>
        </recommendedName>
    </domain>
    <domain>
        <recommendedName>
            <fullName evidence="1">Methenyltetrahydrofolate cyclohydrolase</fullName>
            <ecNumber evidence="1">3.5.4.9</ecNumber>
        </recommendedName>
    </domain>
</protein>